<sequence>MKVTDVRLRKIQTDGRMKALVSITLDEAFVIHDLRVIEGNSGLFVAMPSKRTPDGEFRDIAHPINSDMRQEIQDAVMKVYDETDEVVPDKNATSEDSEEA</sequence>
<dbReference type="EMBL" id="BA000017">
    <property type="protein sequence ID" value="BAB56660.2"/>
    <property type="molecule type" value="Genomic_DNA"/>
</dbReference>
<dbReference type="RefSeq" id="WP_000868999.1">
    <property type="nucleotide sequence ID" value="NC_002758.2"/>
</dbReference>
<dbReference type="SMR" id="Q99WA5"/>
<dbReference type="KEGG" id="sav:SAV0498"/>
<dbReference type="HOGENOM" id="CLU_103669_2_1_9"/>
<dbReference type="PhylomeDB" id="Q99WA5"/>
<dbReference type="Proteomes" id="UP000002481">
    <property type="component" value="Chromosome"/>
</dbReference>
<dbReference type="GO" id="GO:0000917">
    <property type="term" value="P:division septum assembly"/>
    <property type="evidence" value="ECO:0007669"/>
    <property type="project" value="UniProtKB-KW"/>
</dbReference>
<dbReference type="GO" id="GO:0030435">
    <property type="term" value="P:sporulation resulting in formation of a cellular spore"/>
    <property type="evidence" value="ECO:0007669"/>
    <property type="project" value="InterPro"/>
</dbReference>
<dbReference type="Gene3D" id="3.30.1120.40">
    <property type="entry name" value="Stage V sporulation protein G"/>
    <property type="match status" value="1"/>
</dbReference>
<dbReference type="HAMAP" id="MF_00819">
    <property type="entry name" value="SpoVG"/>
    <property type="match status" value="1"/>
</dbReference>
<dbReference type="InterPro" id="IPR007170">
    <property type="entry name" value="SpoVG"/>
</dbReference>
<dbReference type="InterPro" id="IPR036751">
    <property type="entry name" value="SpoVG_sf"/>
</dbReference>
<dbReference type="NCBIfam" id="NF009749">
    <property type="entry name" value="PRK13259.1"/>
    <property type="match status" value="1"/>
</dbReference>
<dbReference type="PANTHER" id="PTHR38429">
    <property type="entry name" value="SEPTATION PROTEIN SPOVG-RELATED"/>
    <property type="match status" value="1"/>
</dbReference>
<dbReference type="PANTHER" id="PTHR38429:SF1">
    <property type="entry name" value="SEPTATION PROTEIN SPOVG-RELATED"/>
    <property type="match status" value="1"/>
</dbReference>
<dbReference type="Pfam" id="PF04026">
    <property type="entry name" value="SpoVG"/>
    <property type="match status" value="1"/>
</dbReference>
<dbReference type="SUPFAM" id="SSF160537">
    <property type="entry name" value="SpoVG-like"/>
    <property type="match status" value="1"/>
</dbReference>
<protein>
    <recommendedName>
        <fullName evidence="1">Putative septation protein SpoVG</fullName>
    </recommendedName>
</protein>
<organism>
    <name type="scientific">Staphylococcus aureus (strain Mu50 / ATCC 700699)</name>
    <dbReference type="NCBI Taxonomy" id="158878"/>
    <lineage>
        <taxon>Bacteria</taxon>
        <taxon>Bacillati</taxon>
        <taxon>Bacillota</taxon>
        <taxon>Bacilli</taxon>
        <taxon>Bacillales</taxon>
        <taxon>Staphylococcaceae</taxon>
        <taxon>Staphylococcus</taxon>
    </lineage>
</organism>
<gene>
    <name evidence="1" type="primary">spoVG</name>
    <name type="ordered locus">SAV0498</name>
</gene>
<evidence type="ECO:0000255" key="1">
    <source>
        <dbReference type="HAMAP-Rule" id="MF_00819"/>
    </source>
</evidence>
<feature type="chain" id="PRO_0000157208" description="Putative septation protein SpoVG">
    <location>
        <begin position="1"/>
        <end position="100"/>
    </location>
</feature>
<keyword id="KW-0131">Cell cycle</keyword>
<keyword id="KW-0132">Cell division</keyword>
<keyword id="KW-0717">Septation</keyword>
<proteinExistence type="inferred from homology"/>
<comment type="function">
    <text evidence="1">Could be involved in septation.</text>
</comment>
<comment type="similarity">
    <text evidence="1">Belongs to the SpoVG family.</text>
</comment>
<reference key="1">
    <citation type="journal article" date="2001" name="Lancet">
        <title>Whole genome sequencing of meticillin-resistant Staphylococcus aureus.</title>
        <authorList>
            <person name="Kuroda M."/>
            <person name="Ohta T."/>
            <person name="Uchiyama I."/>
            <person name="Baba T."/>
            <person name="Yuzawa H."/>
            <person name="Kobayashi I."/>
            <person name="Cui L."/>
            <person name="Oguchi A."/>
            <person name="Aoki K."/>
            <person name="Nagai Y."/>
            <person name="Lian J.-Q."/>
            <person name="Ito T."/>
            <person name="Kanamori M."/>
            <person name="Matsumaru H."/>
            <person name="Maruyama A."/>
            <person name="Murakami H."/>
            <person name="Hosoyama A."/>
            <person name="Mizutani-Ui Y."/>
            <person name="Takahashi N.K."/>
            <person name="Sawano T."/>
            <person name="Inoue R."/>
            <person name="Kaito C."/>
            <person name="Sekimizu K."/>
            <person name="Hirakawa H."/>
            <person name="Kuhara S."/>
            <person name="Goto S."/>
            <person name="Yabuzaki J."/>
            <person name="Kanehisa M."/>
            <person name="Yamashita A."/>
            <person name="Oshima K."/>
            <person name="Furuya K."/>
            <person name="Yoshino C."/>
            <person name="Shiba T."/>
            <person name="Hattori M."/>
            <person name="Ogasawara N."/>
            <person name="Hayashi H."/>
            <person name="Hiramatsu K."/>
        </authorList>
    </citation>
    <scope>NUCLEOTIDE SEQUENCE [LARGE SCALE GENOMIC DNA]</scope>
    <source>
        <strain>Mu50 / ATCC 700699</strain>
    </source>
</reference>
<name>SP5G_STAAM</name>
<accession>Q99WA5</accession>